<reference key="1">
    <citation type="journal article" date="2006" name="J. Bacteriol.">
        <title>Complete genome sequence of the dehalorespiring bacterium Desulfitobacterium hafniense Y51 and comparison with Dehalococcoides ethenogenes 195.</title>
        <authorList>
            <person name="Nonaka H."/>
            <person name="Keresztes G."/>
            <person name="Shinoda Y."/>
            <person name="Ikenaga Y."/>
            <person name="Abe M."/>
            <person name="Naito K."/>
            <person name="Inatomi K."/>
            <person name="Furukawa K."/>
            <person name="Inui M."/>
            <person name="Yukawa H."/>
        </authorList>
    </citation>
    <scope>NUCLEOTIDE SEQUENCE [LARGE SCALE GENOMIC DNA]</scope>
    <source>
        <strain>Y51</strain>
    </source>
</reference>
<dbReference type="EMBL" id="AP008230">
    <property type="protein sequence ID" value="BAE82264.1"/>
    <property type="molecule type" value="Genomic_DNA"/>
</dbReference>
<dbReference type="RefSeq" id="WP_005810155.1">
    <property type="nucleotide sequence ID" value="NC_007907.1"/>
</dbReference>
<dbReference type="SMR" id="Q250M8"/>
<dbReference type="STRING" id="138119.DSY0475"/>
<dbReference type="KEGG" id="dsy:DSY0475"/>
<dbReference type="eggNOG" id="COG0185">
    <property type="taxonomic scope" value="Bacteria"/>
</dbReference>
<dbReference type="HOGENOM" id="CLU_144911_0_1_9"/>
<dbReference type="Proteomes" id="UP000001946">
    <property type="component" value="Chromosome"/>
</dbReference>
<dbReference type="GO" id="GO:0005737">
    <property type="term" value="C:cytoplasm"/>
    <property type="evidence" value="ECO:0007669"/>
    <property type="project" value="UniProtKB-ARBA"/>
</dbReference>
<dbReference type="GO" id="GO:0015935">
    <property type="term" value="C:small ribosomal subunit"/>
    <property type="evidence" value="ECO:0007669"/>
    <property type="project" value="InterPro"/>
</dbReference>
<dbReference type="GO" id="GO:0019843">
    <property type="term" value="F:rRNA binding"/>
    <property type="evidence" value="ECO:0007669"/>
    <property type="project" value="UniProtKB-UniRule"/>
</dbReference>
<dbReference type="GO" id="GO:0003735">
    <property type="term" value="F:structural constituent of ribosome"/>
    <property type="evidence" value="ECO:0007669"/>
    <property type="project" value="InterPro"/>
</dbReference>
<dbReference type="GO" id="GO:0000028">
    <property type="term" value="P:ribosomal small subunit assembly"/>
    <property type="evidence" value="ECO:0007669"/>
    <property type="project" value="TreeGrafter"/>
</dbReference>
<dbReference type="GO" id="GO:0006412">
    <property type="term" value="P:translation"/>
    <property type="evidence" value="ECO:0007669"/>
    <property type="project" value="UniProtKB-UniRule"/>
</dbReference>
<dbReference type="FunFam" id="3.30.860.10:FF:000001">
    <property type="entry name" value="30S ribosomal protein S19"/>
    <property type="match status" value="1"/>
</dbReference>
<dbReference type="Gene3D" id="3.30.860.10">
    <property type="entry name" value="30s Ribosomal Protein S19, Chain A"/>
    <property type="match status" value="1"/>
</dbReference>
<dbReference type="HAMAP" id="MF_00531">
    <property type="entry name" value="Ribosomal_uS19"/>
    <property type="match status" value="1"/>
</dbReference>
<dbReference type="InterPro" id="IPR002222">
    <property type="entry name" value="Ribosomal_uS19"/>
</dbReference>
<dbReference type="InterPro" id="IPR005732">
    <property type="entry name" value="Ribosomal_uS19_bac-type"/>
</dbReference>
<dbReference type="InterPro" id="IPR023575">
    <property type="entry name" value="Ribosomal_uS19_SF"/>
</dbReference>
<dbReference type="NCBIfam" id="TIGR01050">
    <property type="entry name" value="rpsS_bact"/>
    <property type="match status" value="1"/>
</dbReference>
<dbReference type="PANTHER" id="PTHR11880">
    <property type="entry name" value="RIBOSOMAL PROTEIN S19P FAMILY MEMBER"/>
    <property type="match status" value="1"/>
</dbReference>
<dbReference type="PANTHER" id="PTHR11880:SF8">
    <property type="entry name" value="SMALL RIBOSOMAL SUBUNIT PROTEIN US19M"/>
    <property type="match status" value="1"/>
</dbReference>
<dbReference type="Pfam" id="PF00203">
    <property type="entry name" value="Ribosomal_S19"/>
    <property type="match status" value="1"/>
</dbReference>
<dbReference type="PIRSF" id="PIRSF002144">
    <property type="entry name" value="Ribosomal_S19"/>
    <property type="match status" value="1"/>
</dbReference>
<dbReference type="PRINTS" id="PR00975">
    <property type="entry name" value="RIBOSOMALS19"/>
</dbReference>
<dbReference type="SUPFAM" id="SSF54570">
    <property type="entry name" value="Ribosomal protein S19"/>
    <property type="match status" value="1"/>
</dbReference>
<accession>Q250M8</accession>
<comment type="function">
    <text evidence="1">Protein S19 forms a complex with S13 that binds strongly to the 16S ribosomal RNA.</text>
</comment>
<comment type="similarity">
    <text evidence="1">Belongs to the universal ribosomal protein uS19 family.</text>
</comment>
<proteinExistence type="inferred from homology"/>
<name>RS19_DESHY</name>
<sequence>MSRSLKKGPYVEGRLLARVEKMNAANEKRVLKTWSRSSTIFPQMVGHTIAVHEGRKHIPIYITEDMVGHKLGEFAPTRTYKGHAGSEKSSGLR</sequence>
<keyword id="KW-1185">Reference proteome</keyword>
<keyword id="KW-0687">Ribonucleoprotein</keyword>
<keyword id="KW-0689">Ribosomal protein</keyword>
<keyword id="KW-0694">RNA-binding</keyword>
<keyword id="KW-0699">rRNA-binding</keyword>
<evidence type="ECO:0000255" key="1">
    <source>
        <dbReference type="HAMAP-Rule" id="MF_00531"/>
    </source>
</evidence>
<evidence type="ECO:0000305" key="2"/>
<organism>
    <name type="scientific">Desulfitobacterium hafniense (strain Y51)</name>
    <dbReference type="NCBI Taxonomy" id="138119"/>
    <lineage>
        <taxon>Bacteria</taxon>
        <taxon>Bacillati</taxon>
        <taxon>Bacillota</taxon>
        <taxon>Clostridia</taxon>
        <taxon>Eubacteriales</taxon>
        <taxon>Desulfitobacteriaceae</taxon>
        <taxon>Desulfitobacterium</taxon>
    </lineage>
</organism>
<gene>
    <name evidence="1" type="primary">rpsS</name>
    <name type="ordered locus">DSY0475</name>
</gene>
<feature type="chain" id="PRO_0000265357" description="Small ribosomal subunit protein uS19">
    <location>
        <begin position="1"/>
        <end position="93"/>
    </location>
</feature>
<protein>
    <recommendedName>
        <fullName evidence="1">Small ribosomal subunit protein uS19</fullName>
    </recommendedName>
    <alternativeName>
        <fullName evidence="2">30S ribosomal protein S19</fullName>
    </alternativeName>
</protein>